<keyword id="KW-0175">Coiled coil</keyword>
<keyword id="KW-1185">Reference proteome</keyword>
<proteinExistence type="predicted"/>
<reference key="1">
    <citation type="journal article" date="1996" name="Microbiology">
        <title>The 25 degrees-36 degrees region of the Bacillus subtilis chromosome: determination of the sequence of a 146 kb segment and identification of 113 genes.</title>
        <authorList>
            <person name="Yamane K."/>
            <person name="Kumano M."/>
            <person name="Kurita K."/>
        </authorList>
    </citation>
    <scope>NUCLEOTIDE SEQUENCE [GENOMIC DNA]</scope>
    <source>
        <strain>168</strain>
    </source>
</reference>
<reference key="2">
    <citation type="journal article" date="1997" name="Nature">
        <title>The complete genome sequence of the Gram-positive bacterium Bacillus subtilis.</title>
        <authorList>
            <person name="Kunst F."/>
            <person name="Ogasawara N."/>
            <person name="Moszer I."/>
            <person name="Albertini A.M."/>
            <person name="Alloni G."/>
            <person name="Azevedo V."/>
            <person name="Bertero M.G."/>
            <person name="Bessieres P."/>
            <person name="Bolotin A."/>
            <person name="Borchert S."/>
            <person name="Borriss R."/>
            <person name="Boursier L."/>
            <person name="Brans A."/>
            <person name="Braun M."/>
            <person name="Brignell S.C."/>
            <person name="Bron S."/>
            <person name="Brouillet S."/>
            <person name="Bruschi C.V."/>
            <person name="Caldwell B."/>
            <person name="Capuano V."/>
            <person name="Carter N.M."/>
            <person name="Choi S.-K."/>
            <person name="Codani J.-J."/>
            <person name="Connerton I.F."/>
            <person name="Cummings N.J."/>
            <person name="Daniel R.A."/>
            <person name="Denizot F."/>
            <person name="Devine K.M."/>
            <person name="Duesterhoeft A."/>
            <person name="Ehrlich S.D."/>
            <person name="Emmerson P.T."/>
            <person name="Entian K.-D."/>
            <person name="Errington J."/>
            <person name="Fabret C."/>
            <person name="Ferrari E."/>
            <person name="Foulger D."/>
            <person name="Fritz C."/>
            <person name="Fujita M."/>
            <person name="Fujita Y."/>
            <person name="Fuma S."/>
            <person name="Galizzi A."/>
            <person name="Galleron N."/>
            <person name="Ghim S.-Y."/>
            <person name="Glaser P."/>
            <person name="Goffeau A."/>
            <person name="Golightly E.J."/>
            <person name="Grandi G."/>
            <person name="Guiseppi G."/>
            <person name="Guy B.J."/>
            <person name="Haga K."/>
            <person name="Haiech J."/>
            <person name="Harwood C.R."/>
            <person name="Henaut A."/>
            <person name="Hilbert H."/>
            <person name="Holsappel S."/>
            <person name="Hosono S."/>
            <person name="Hullo M.-F."/>
            <person name="Itaya M."/>
            <person name="Jones L.-M."/>
            <person name="Joris B."/>
            <person name="Karamata D."/>
            <person name="Kasahara Y."/>
            <person name="Klaerr-Blanchard M."/>
            <person name="Klein C."/>
            <person name="Kobayashi Y."/>
            <person name="Koetter P."/>
            <person name="Koningstein G."/>
            <person name="Krogh S."/>
            <person name="Kumano M."/>
            <person name="Kurita K."/>
            <person name="Lapidus A."/>
            <person name="Lardinois S."/>
            <person name="Lauber J."/>
            <person name="Lazarevic V."/>
            <person name="Lee S.-M."/>
            <person name="Levine A."/>
            <person name="Liu H."/>
            <person name="Masuda S."/>
            <person name="Mauel C."/>
            <person name="Medigue C."/>
            <person name="Medina N."/>
            <person name="Mellado R.P."/>
            <person name="Mizuno M."/>
            <person name="Moestl D."/>
            <person name="Nakai S."/>
            <person name="Noback M."/>
            <person name="Noone D."/>
            <person name="O'Reilly M."/>
            <person name="Ogawa K."/>
            <person name="Ogiwara A."/>
            <person name="Oudega B."/>
            <person name="Park S.-H."/>
            <person name="Parro V."/>
            <person name="Pohl T.M."/>
            <person name="Portetelle D."/>
            <person name="Porwollik S."/>
            <person name="Prescott A.M."/>
            <person name="Presecan E."/>
            <person name="Pujic P."/>
            <person name="Purnelle B."/>
            <person name="Rapoport G."/>
            <person name="Rey M."/>
            <person name="Reynolds S."/>
            <person name="Rieger M."/>
            <person name="Rivolta C."/>
            <person name="Rocha E."/>
            <person name="Roche B."/>
            <person name="Rose M."/>
            <person name="Sadaie Y."/>
            <person name="Sato T."/>
            <person name="Scanlan E."/>
            <person name="Schleich S."/>
            <person name="Schroeter R."/>
            <person name="Scoffone F."/>
            <person name="Sekiguchi J."/>
            <person name="Sekowska A."/>
            <person name="Seror S.J."/>
            <person name="Serror P."/>
            <person name="Shin B.-S."/>
            <person name="Soldo B."/>
            <person name="Sorokin A."/>
            <person name="Tacconi E."/>
            <person name="Takagi T."/>
            <person name="Takahashi H."/>
            <person name="Takemaru K."/>
            <person name="Takeuchi M."/>
            <person name="Tamakoshi A."/>
            <person name="Tanaka T."/>
            <person name="Terpstra P."/>
            <person name="Tognoni A."/>
            <person name="Tosato V."/>
            <person name="Uchiyama S."/>
            <person name="Vandenbol M."/>
            <person name="Vannier F."/>
            <person name="Vassarotti A."/>
            <person name="Viari A."/>
            <person name="Wambutt R."/>
            <person name="Wedler E."/>
            <person name="Wedler H."/>
            <person name="Weitzenegger T."/>
            <person name="Winters P."/>
            <person name="Wipat A."/>
            <person name="Yamamoto H."/>
            <person name="Yamane K."/>
            <person name="Yasumoto K."/>
            <person name="Yata K."/>
            <person name="Yoshida K."/>
            <person name="Yoshikawa H.-F."/>
            <person name="Zumstein E."/>
            <person name="Yoshikawa H."/>
            <person name="Danchin A."/>
        </authorList>
    </citation>
    <scope>NUCLEOTIDE SEQUENCE [LARGE SCALE GENOMIC DNA]</scope>
    <source>
        <strain>168</strain>
    </source>
</reference>
<organism>
    <name type="scientific">Bacillus subtilis (strain 168)</name>
    <dbReference type="NCBI Taxonomy" id="224308"/>
    <lineage>
        <taxon>Bacteria</taxon>
        <taxon>Bacillati</taxon>
        <taxon>Bacillota</taxon>
        <taxon>Bacilli</taxon>
        <taxon>Bacillales</taxon>
        <taxon>Bacillaceae</taxon>
        <taxon>Bacillus</taxon>
    </lineage>
</organism>
<dbReference type="EMBL" id="D50453">
    <property type="protein sequence ID" value="BAA08953.1"/>
    <property type="molecule type" value="Genomic_DNA"/>
</dbReference>
<dbReference type="EMBL" id="AL009126">
    <property type="protein sequence ID" value="CAB12113.1"/>
    <property type="molecule type" value="Genomic_DNA"/>
</dbReference>
<dbReference type="PIR" id="G69758">
    <property type="entry name" value="G69758"/>
</dbReference>
<dbReference type="RefSeq" id="NP_388201.1">
    <property type="nucleotide sequence ID" value="NC_000964.3"/>
</dbReference>
<dbReference type="RefSeq" id="WP_003246492.1">
    <property type="nucleotide sequence ID" value="NZ_OZ025638.1"/>
</dbReference>
<dbReference type="FunCoup" id="P94389">
    <property type="interactions" value="86"/>
</dbReference>
<dbReference type="STRING" id="224308.BSU03190"/>
<dbReference type="PaxDb" id="224308-BSU03190"/>
<dbReference type="EnsemblBacteria" id="CAB12113">
    <property type="protein sequence ID" value="CAB12113"/>
    <property type="gene ID" value="BSU_03190"/>
</dbReference>
<dbReference type="GeneID" id="938336"/>
<dbReference type="KEGG" id="bsu:BSU03190"/>
<dbReference type="PATRIC" id="fig|224308.179.peg.333"/>
<dbReference type="eggNOG" id="COG3541">
    <property type="taxonomic scope" value="Bacteria"/>
</dbReference>
<dbReference type="InParanoid" id="P94389"/>
<dbReference type="OrthoDB" id="9796845at2"/>
<dbReference type="PhylomeDB" id="P94389"/>
<dbReference type="BioCyc" id="BSUB:BSU03190-MONOMER"/>
<dbReference type="Proteomes" id="UP000001570">
    <property type="component" value="Chromosome"/>
</dbReference>
<dbReference type="InterPro" id="IPR018775">
    <property type="entry name" value="RlaP"/>
</dbReference>
<dbReference type="PANTHER" id="PTHR34817">
    <property type="entry name" value="NUCLEOTIDYLTRANSFERASE"/>
    <property type="match status" value="1"/>
</dbReference>
<dbReference type="PANTHER" id="PTHR34817:SF2">
    <property type="entry name" value="NUCLEOTIDYLTRANSFERASE"/>
    <property type="match status" value="1"/>
</dbReference>
<dbReference type="Pfam" id="PF10127">
    <property type="entry name" value="RlaP"/>
    <property type="match status" value="1"/>
</dbReference>
<protein>
    <recommendedName>
        <fullName>Uncharacterized protein YcgL</fullName>
    </recommendedName>
</protein>
<gene>
    <name type="primary">ycgL</name>
    <name type="ordered locus">BSU03190</name>
</gene>
<name>YCGL_BACSU</name>
<accession>P94389</accession>
<accession>Q797Q6</accession>
<evidence type="ECO:0000255" key="1"/>
<feature type="chain" id="PRO_0000360443" description="Uncharacterized protein YcgL">
    <location>
        <begin position="1"/>
        <end position="260"/>
    </location>
</feature>
<feature type="coiled-coil region" evidence="1">
    <location>
        <begin position="214"/>
        <end position="252"/>
    </location>
</feature>
<sequence length="260" mass="30872">MKQRIIDELKRIEQSYGVKIVYAVESGSRAWGFPSQDSDYDVRFIYVPKKEWYFSIEQERDVIEEPIHDLLDISGWELRKTLRLFKKSNPPLLEWLSSDIVYYEAFTTAEQLRKLRTEAFKPEASVYHYINMARRNVKDYLQGQEVKIKKYFYVLRPILACQWIEKHGTIPPMDFTVLMNELVAEPELKAEMETLLERKRRGEELDLEARIDVIHQFIETEIERIMEAAKELKAEKKDMTSELNRLLLNTVEEVWKDGGS</sequence>